<reference key="1">
    <citation type="journal article" date="2010" name="J. Bacteriol.">
        <title>Whole genome sequences of two Xylella fastidiosa strains (M12 and M23) causing almond leaf scorch disease in California.</title>
        <authorList>
            <person name="Chen J."/>
            <person name="Xie G."/>
            <person name="Han S."/>
            <person name="Chertkov O."/>
            <person name="Sims D."/>
            <person name="Civerolo E.L."/>
        </authorList>
    </citation>
    <scope>NUCLEOTIDE SEQUENCE [LARGE SCALE GENOMIC DNA]</scope>
    <source>
        <strain>M23</strain>
    </source>
</reference>
<organism>
    <name type="scientific">Xylella fastidiosa (strain M23)</name>
    <dbReference type="NCBI Taxonomy" id="405441"/>
    <lineage>
        <taxon>Bacteria</taxon>
        <taxon>Pseudomonadati</taxon>
        <taxon>Pseudomonadota</taxon>
        <taxon>Gammaproteobacteria</taxon>
        <taxon>Lysobacterales</taxon>
        <taxon>Lysobacteraceae</taxon>
        <taxon>Xylella</taxon>
    </lineage>
</organism>
<proteinExistence type="inferred from homology"/>
<gene>
    <name evidence="1" type="primary">glmM</name>
    <name type="ordered locus">XfasM23_0721</name>
</gene>
<comment type="function">
    <text evidence="1">Catalyzes the conversion of glucosamine-6-phosphate to glucosamine-1-phosphate.</text>
</comment>
<comment type="catalytic activity">
    <reaction evidence="1">
        <text>alpha-D-glucosamine 1-phosphate = D-glucosamine 6-phosphate</text>
        <dbReference type="Rhea" id="RHEA:23424"/>
        <dbReference type="ChEBI" id="CHEBI:58516"/>
        <dbReference type="ChEBI" id="CHEBI:58725"/>
        <dbReference type="EC" id="5.4.2.10"/>
    </reaction>
</comment>
<comment type="cofactor">
    <cofactor evidence="1">
        <name>Mg(2+)</name>
        <dbReference type="ChEBI" id="CHEBI:18420"/>
    </cofactor>
    <text evidence="1">Binds 1 Mg(2+) ion per subunit.</text>
</comment>
<comment type="PTM">
    <text evidence="1">Activated by phosphorylation.</text>
</comment>
<comment type="similarity">
    <text evidence="1">Belongs to the phosphohexose mutase family.</text>
</comment>
<keyword id="KW-0413">Isomerase</keyword>
<keyword id="KW-0460">Magnesium</keyword>
<keyword id="KW-0479">Metal-binding</keyword>
<keyword id="KW-0597">Phosphoprotein</keyword>
<sequence length="446" mass="47244">MSRYFGTDGIRGRVGQGLISADFVLRLGNALGRVLAQGRDTRPMVLIGKDTRISGYMFESALEAGLVAAGADVQLIGPMPTPAIAFLTNTLRADAGVVISASHNPHDDNGIKFFSAMGEKLDDATEAAIEAAIEAPFLTVDSEYLGKVKRTRDAIGRYIEFSKASVPRGFTLRGLKLVLDCAHGATYHIAPMLFRELGAELVTIGVDPDGLNINAGVGSTHLETLAATVRESGADLGIAFDGDGDRVLMTDAQGRTVDGDDLLYVLARAWRASGRLKGTVVGTLMSNYGLEQALGTLGIPFIRARVGDRYVHQALVESGGVLGGEASGHLLCLDRATTGDGIVSALQVLEVLRHEGLTLSQALLGLHKVPQKTVNVCWSGPARAAVEMPEVRQALVEAQAAVQGRGRVFLRPSGTEPVVRITVEADDVVLMQQTLDRLADVVRDAA</sequence>
<dbReference type="EC" id="5.4.2.10" evidence="1"/>
<dbReference type="EMBL" id="CP001011">
    <property type="protein sequence ID" value="ACB92162.1"/>
    <property type="molecule type" value="Genomic_DNA"/>
</dbReference>
<dbReference type="SMR" id="B2IA03"/>
<dbReference type="KEGG" id="xfn:XfasM23_0721"/>
<dbReference type="HOGENOM" id="CLU_016950_7_0_6"/>
<dbReference type="Proteomes" id="UP000001698">
    <property type="component" value="Chromosome"/>
</dbReference>
<dbReference type="GO" id="GO:0005829">
    <property type="term" value="C:cytosol"/>
    <property type="evidence" value="ECO:0007669"/>
    <property type="project" value="TreeGrafter"/>
</dbReference>
<dbReference type="GO" id="GO:0000287">
    <property type="term" value="F:magnesium ion binding"/>
    <property type="evidence" value="ECO:0007669"/>
    <property type="project" value="UniProtKB-UniRule"/>
</dbReference>
<dbReference type="GO" id="GO:0008966">
    <property type="term" value="F:phosphoglucosamine mutase activity"/>
    <property type="evidence" value="ECO:0007669"/>
    <property type="project" value="UniProtKB-UniRule"/>
</dbReference>
<dbReference type="GO" id="GO:0004615">
    <property type="term" value="F:phosphomannomutase activity"/>
    <property type="evidence" value="ECO:0007669"/>
    <property type="project" value="TreeGrafter"/>
</dbReference>
<dbReference type="GO" id="GO:0005975">
    <property type="term" value="P:carbohydrate metabolic process"/>
    <property type="evidence" value="ECO:0007669"/>
    <property type="project" value="InterPro"/>
</dbReference>
<dbReference type="GO" id="GO:0009252">
    <property type="term" value="P:peptidoglycan biosynthetic process"/>
    <property type="evidence" value="ECO:0007669"/>
    <property type="project" value="TreeGrafter"/>
</dbReference>
<dbReference type="GO" id="GO:0006048">
    <property type="term" value="P:UDP-N-acetylglucosamine biosynthetic process"/>
    <property type="evidence" value="ECO:0007669"/>
    <property type="project" value="TreeGrafter"/>
</dbReference>
<dbReference type="CDD" id="cd05802">
    <property type="entry name" value="GlmM"/>
    <property type="match status" value="1"/>
</dbReference>
<dbReference type="FunFam" id="3.40.120.10:FF:000001">
    <property type="entry name" value="Phosphoglucosamine mutase"/>
    <property type="match status" value="1"/>
</dbReference>
<dbReference type="FunFam" id="3.40.120.10:FF:000003">
    <property type="entry name" value="Phosphoglucosamine mutase"/>
    <property type="match status" value="1"/>
</dbReference>
<dbReference type="Gene3D" id="3.40.120.10">
    <property type="entry name" value="Alpha-D-Glucose-1,6-Bisphosphate, subunit A, domain 3"/>
    <property type="match status" value="3"/>
</dbReference>
<dbReference type="Gene3D" id="3.30.310.50">
    <property type="entry name" value="Alpha-D-phosphohexomutase, C-terminal domain"/>
    <property type="match status" value="1"/>
</dbReference>
<dbReference type="HAMAP" id="MF_01554_B">
    <property type="entry name" value="GlmM_B"/>
    <property type="match status" value="1"/>
</dbReference>
<dbReference type="InterPro" id="IPR005844">
    <property type="entry name" value="A-D-PHexomutase_a/b/a-I"/>
</dbReference>
<dbReference type="InterPro" id="IPR016055">
    <property type="entry name" value="A-D-PHexomutase_a/b/a-I/II/III"/>
</dbReference>
<dbReference type="InterPro" id="IPR005845">
    <property type="entry name" value="A-D-PHexomutase_a/b/a-II"/>
</dbReference>
<dbReference type="InterPro" id="IPR005846">
    <property type="entry name" value="A-D-PHexomutase_a/b/a-III"/>
</dbReference>
<dbReference type="InterPro" id="IPR005843">
    <property type="entry name" value="A-D-PHexomutase_C"/>
</dbReference>
<dbReference type="InterPro" id="IPR036900">
    <property type="entry name" value="A-D-PHexomutase_C_sf"/>
</dbReference>
<dbReference type="InterPro" id="IPR016066">
    <property type="entry name" value="A-D-PHexomutase_CS"/>
</dbReference>
<dbReference type="InterPro" id="IPR005841">
    <property type="entry name" value="Alpha-D-phosphohexomutase_SF"/>
</dbReference>
<dbReference type="InterPro" id="IPR006352">
    <property type="entry name" value="GlmM_bact"/>
</dbReference>
<dbReference type="InterPro" id="IPR050060">
    <property type="entry name" value="Phosphoglucosamine_mutase"/>
</dbReference>
<dbReference type="NCBIfam" id="TIGR01455">
    <property type="entry name" value="glmM"/>
    <property type="match status" value="1"/>
</dbReference>
<dbReference type="NCBIfam" id="NF008139">
    <property type="entry name" value="PRK10887.1"/>
    <property type="match status" value="1"/>
</dbReference>
<dbReference type="PANTHER" id="PTHR42946:SF1">
    <property type="entry name" value="PHOSPHOGLUCOMUTASE (ALPHA-D-GLUCOSE-1,6-BISPHOSPHATE-DEPENDENT)"/>
    <property type="match status" value="1"/>
</dbReference>
<dbReference type="PANTHER" id="PTHR42946">
    <property type="entry name" value="PHOSPHOHEXOSE MUTASE"/>
    <property type="match status" value="1"/>
</dbReference>
<dbReference type="Pfam" id="PF02878">
    <property type="entry name" value="PGM_PMM_I"/>
    <property type="match status" value="1"/>
</dbReference>
<dbReference type="Pfam" id="PF02879">
    <property type="entry name" value="PGM_PMM_II"/>
    <property type="match status" value="1"/>
</dbReference>
<dbReference type="Pfam" id="PF02880">
    <property type="entry name" value="PGM_PMM_III"/>
    <property type="match status" value="1"/>
</dbReference>
<dbReference type="Pfam" id="PF00408">
    <property type="entry name" value="PGM_PMM_IV"/>
    <property type="match status" value="1"/>
</dbReference>
<dbReference type="PRINTS" id="PR00509">
    <property type="entry name" value="PGMPMM"/>
</dbReference>
<dbReference type="SUPFAM" id="SSF55957">
    <property type="entry name" value="Phosphoglucomutase, C-terminal domain"/>
    <property type="match status" value="1"/>
</dbReference>
<dbReference type="SUPFAM" id="SSF53738">
    <property type="entry name" value="Phosphoglucomutase, first 3 domains"/>
    <property type="match status" value="3"/>
</dbReference>
<dbReference type="PROSITE" id="PS00710">
    <property type="entry name" value="PGM_PMM"/>
    <property type="match status" value="1"/>
</dbReference>
<feature type="chain" id="PRO_0000343607" description="Phosphoglucosamine mutase">
    <location>
        <begin position="1"/>
        <end position="446"/>
    </location>
</feature>
<feature type="active site" description="Phosphoserine intermediate" evidence="1">
    <location>
        <position position="102"/>
    </location>
</feature>
<feature type="binding site" description="via phosphate group" evidence="1">
    <location>
        <position position="102"/>
    </location>
    <ligand>
        <name>Mg(2+)</name>
        <dbReference type="ChEBI" id="CHEBI:18420"/>
    </ligand>
</feature>
<feature type="binding site" evidence="1">
    <location>
        <position position="241"/>
    </location>
    <ligand>
        <name>Mg(2+)</name>
        <dbReference type="ChEBI" id="CHEBI:18420"/>
    </ligand>
</feature>
<feature type="binding site" evidence="1">
    <location>
        <position position="243"/>
    </location>
    <ligand>
        <name>Mg(2+)</name>
        <dbReference type="ChEBI" id="CHEBI:18420"/>
    </ligand>
</feature>
<feature type="binding site" evidence="1">
    <location>
        <position position="245"/>
    </location>
    <ligand>
        <name>Mg(2+)</name>
        <dbReference type="ChEBI" id="CHEBI:18420"/>
    </ligand>
</feature>
<feature type="modified residue" description="Phosphoserine" evidence="1">
    <location>
        <position position="102"/>
    </location>
</feature>
<name>GLMM_XYLF2</name>
<protein>
    <recommendedName>
        <fullName evidence="1">Phosphoglucosamine mutase</fullName>
        <ecNumber evidence="1">5.4.2.10</ecNumber>
    </recommendedName>
</protein>
<evidence type="ECO:0000255" key="1">
    <source>
        <dbReference type="HAMAP-Rule" id="MF_01554"/>
    </source>
</evidence>
<accession>B2IA03</accession>